<protein>
    <recommendedName>
        <fullName>Histone deacetylase complex subunit SAP30</fullName>
    </recommendedName>
    <alternativeName>
        <fullName>30 kDa Sin3-associated polypeptide</fullName>
    </alternativeName>
    <alternativeName>
        <fullName>Sin3 corepressor complex subunit SAP30</fullName>
    </alternativeName>
    <alternativeName>
        <fullName>Sin3-associated polypeptide p30</fullName>
    </alternativeName>
</protein>
<dbReference type="EMBL" id="AF075136">
    <property type="protein sequence ID" value="AAC26007.1"/>
    <property type="molecule type" value="mRNA"/>
</dbReference>
<dbReference type="EMBL" id="AK010928">
    <property type="protein sequence ID" value="BAB27273.1"/>
    <property type="molecule type" value="mRNA"/>
</dbReference>
<dbReference type="EMBL" id="AK088745">
    <property type="protein sequence ID" value="BAC40543.1"/>
    <property type="molecule type" value="mRNA"/>
</dbReference>
<dbReference type="EMBL" id="CH466569">
    <property type="protein sequence ID" value="EDL28616.1"/>
    <property type="molecule type" value="Genomic_DNA"/>
</dbReference>
<dbReference type="EMBL" id="BC132081">
    <property type="protein sequence ID" value="AAI32082.1"/>
    <property type="molecule type" value="mRNA"/>
</dbReference>
<dbReference type="EMBL" id="BC132087">
    <property type="protein sequence ID" value="AAI32088.1"/>
    <property type="molecule type" value="mRNA"/>
</dbReference>
<dbReference type="EMBL" id="AJ251216">
    <property type="protein sequence ID" value="CAC24848.1"/>
    <property type="molecule type" value="Genomic_DNA"/>
</dbReference>
<dbReference type="CCDS" id="CCDS22316.1"/>
<dbReference type="RefSeq" id="NP_068560.1">
    <property type="nucleotide sequence ID" value="NM_021788.3"/>
</dbReference>
<dbReference type="PDB" id="2LD7">
    <property type="method" value="NMR"/>
    <property type="chains" value="A=130-220"/>
</dbReference>
<dbReference type="PDBsum" id="2LD7"/>
<dbReference type="BMRB" id="O88574"/>
<dbReference type="SMR" id="O88574"/>
<dbReference type="BioGRID" id="208559">
    <property type="interactions" value="7"/>
</dbReference>
<dbReference type="ComplexPortal" id="CPX-3441">
    <property type="entry name" value="SIN3A histone deacetylase complex, ES cell-specific variant"/>
</dbReference>
<dbReference type="ComplexPortal" id="CPX-3443">
    <property type="entry name" value="SIN3A histone deacetylase complex"/>
</dbReference>
<dbReference type="ComplexPortal" id="CPX-3444">
    <property type="entry name" value="SIN3B histone deacetylase complex"/>
</dbReference>
<dbReference type="CORUM" id="O88574"/>
<dbReference type="FunCoup" id="O88574">
    <property type="interactions" value="2052"/>
</dbReference>
<dbReference type="IntAct" id="O88574">
    <property type="interactions" value="7"/>
</dbReference>
<dbReference type="MINT" id="O88574"/>
<dbReference type="STRING" id="10090.ENSMUSP00000034022"/>
<dbReference type="iPTMnet" id="O88574"/>
<dbReference type="PhosphoSitePlus" id="O88574"/>
<dbReference type="jPOST" id="O88574"/>
<dbReference type="PaxDb" id="10090-ENSMUSP00000034022"/>
<dbReference type="PeptideAtlas" id="O88574"/>
<dbReference type="ProteomicsDB" id="256833"/>
<dbReference type="Pumba" id="O88574"/>
<dbReference type="Antibodypedia" id="17174">
    <property type="antibodies" value="184 antibodies from 28 providers"/>
</dbReference>
<dbReference type="DNASU" id="60406"/>
<dbReference type="Ensembl" id="ENSMUST00000034022.4">
    <property type="protein sequence ID" value="ENSMUSP00000034022.4"/>
    <property type="gene ID" value="ENSMUSG00000031609.4"/>
</dbReference>
<dbReference type="GeneID" id="60406"/>
<dbReference type="KEGG" id="mmu:60406"/>
<dbReference type="UCSC" id="uc009lsu.2">
    <property type="organism name" value="mouse"/>
</dbReference>
<dbReference type="AGR" id="MGI:1929129"/>
<dbReference type="CTD" id="8819"/>
<dbReference type="MGI" id="MGI:1929129">
    <property type="gene designation" value="Sap30"/>
</dbReference>
<dbReference type="VEuPathDB" id="HostDB:ENSMUSG00000031609"/>
<dbReference type="eggNOG" id="ENOG502QWFH">
    <property type="taxonomic scope" value="Eukaryota"/>
</dbReference>
<dbReference type="GeneTree" id="ENSGT00390000006633"/>
<dbReference type="HOGENOM" id="CLU_097961_0_0_1"/>
<dbReference type="InParanoid" id="O88574"/>
<dbReference type="OMA" id="DEYRICC"/>
<dbReference type="OrthoDB" id="510958at2759"/>
<dbReference type="PhylomeDB" id="O88574"/>
<dbReference type="TreeFam" id="TF324135"/>
<dbReference type="Reactome" id="R-MMU-3214815">
    <property type="pathway name" value="HDACs deacetylate histones"/>
</dbReference>
<dbReference type="BioGRID-ORCS" id="60406">
    <property type="hits" value="4 hits in 79 CRISPR screens"/>
</dbReference>
<dbReference type="ChiTaRS" id="Sap30">
    <property type="organism name" value="mouse"/>
</dbReference>
<dbReference type="EvolutionaryTrace" id="O88574"/>
<dbReference type="PRO" id="PR:O88574"/>
<dbReference type="Proteomes" id="UP000000589">
    <property type="component" value="Chromosome 8"/>
</dbReference>
<dbReference type="RNAct" id="O88574">
    <property type="molecule type" value="protein"/>
</dbReference>
<dbReference type="Bgee" id="ENSMUSG00000031609">
    <property type="expression patterns" value="Expressed in animal zygote and 256 other cell types or tissues"/>
</dbReference>
<dbReference type="GO" id="GO:0005654">
    <property type="term" value="C:nucleoplasm"/>
    <property type="evidence" value="ECO:0000304"/>
    <property type="project" value="Reactome"/>
</dbReference>
<dbReference type="GO" id="GO:0005634">
    <property type="term" value="C:nucleus"/>
    <property type="evidence" value="ECO:0000314"/>
    <property type="project" value="MGI"/>
</dbReference>
<dbReference type="GO" id="GO:0070822">
    <property type="term" value="C:Sin3-type complex"/>
    <property type="evidence" value="ECO:0000266"/>
    <property type="project" value="MGI"/>
</dbReference>
<dbReference type="GO" id="GO:0003677">
    <property type="term" value="F:DNA binding"/>
    <property type="evidence" value="ECO:0007669"/>
    <property type="project" value="UniProtKB-KW"/>
</dbReference>
<dbReference type="GO" id="GO:0003714">
    <property type="term" value="F:transcription corepressor activity"/>
    <property type="evidence" value="ECO:0007669"/>
    <property type="project" value="Ensembl"/>
</dbReference>
<dbReference type="GO" id="GO:0008270">
    <property type="term" value="F:zinc ion binding"/>
    <property type="evidence" value="ECO:0007669"/>
    <property type="project" value="UniProtKB-KW"/>
</dbReference>
<dbReference type="GO" id="GO:0030336">
    <property type="term" value="P:negative regulation of cell migration"/>
    <property type="evidence" value="ECO:0000303"/>
    <property type="project" value="ComplexPortal"/>
</dbReference>
<dbReference type="GO" id="GO:1902455">
    <property type="term" value="P:negative regulation of stem cell population maintenance"/>
    <property type="evidence" value="ECO:0000303"/>
    <property type="project" value="ComplexPortal"/>
</dbReference>
<dbReference type="GO" id="GO:0000122">
    <property type="term" value="P:negative regulation of transcription by RNA polymerase II"/>
    <property type="evidence" value="ECO:0000314"/>
    <property type="project" value="MGI"/>
</dbReference>
<dbReference type="GO" id="GO:0030512">
    <property type="term" value="P:negative regulation of transforming growth factor beta receptor signaling pathway"/>
    <property type="evidence" value="ECO:0000303"/>
    <property type="project" value="ComplexPortal"/>
</dbReference>
<dbReference type="GO" id="GO:1902459">
    <property type="term" value="P:positive regulation of stem cell population maintenance"/>
    <property type="evidence" value="ECO:0000303"/>
    <property type="project" value="ComplexPortal"/>
</dbReference>
<dbReference type="GO" id="GO:0035914">
    <property type="term" value="P:skeletal muscle cell differentiation"/>
    <property type="evidence" value="ECO:0000315"/>
    <property type="project" value="MGI"/>
</dbReference>
<dbReference type="Gene3D" id="6.10.160.20">
    <property type="match status" value="1"/>
</dbReference>
<dbReference type="IDEAL" id="IID50061"/>
<dbReference type="InterPro" id="IPR024145">
    <property type="entry name" value="His_deAcase_SAP30/SAP30L"/>
</dbReference>
<dbReference type="InterPro" id="IPR038291">
    <property type="entry name" value="SAP30_C_sf"/>
</dbReference>
<dbReference type="InterPro" id="IPR025718">
    <property type="entry name" value="SAP30_Sin3-bd"/>
</dbReference>
<dbReference type="InterPro" id="IPR025717">
    <property type="entry name" value="SAP30_zn-finger"/>
</dbReference>
<dbReference type="PANTHER" id="PTHR13286:SF7">
    <property type="entry name" value="HISTONE DEACETYLASE COMPLEX SUBUNIT SAP30"/>
    <property type="match status" value="1"/>
</dbReference>
<dbReference type="PANTHER" id="PTHR13286">
    <property type="entry name" value="SAP30"/>
    <property type="match status" value="1"/>
</dbReference>
<dbReference type="Pfam" id="PF13867">
    <property type="entry name" value="SAP30_Sin3_bdg"/>
    <property type="match status" value="1"/>
</dbReference>
<dbReference type="Pfam" id="PF13866">
    <property type="entry name" value="zf-SAP30"/>
    <property type="match status" value="1"/>
</dbReference>
<evidence type="ECO:0000250" key="1">
    <source>
        <dbReference type="UniProtKB" id="O75446"/>
    </source>
</evidence>
<evidence type="ECO:0000256" key="2">
    <source>
        <dbReference type="SAM" id="MobiDB-lite"/>
    </source>
</evidence>
<evidence type="ECO:0000269" key="3">
    <source>
    </source>
</evidence>
<evidence type="ECO:0000269" key="4">
    <source>
    </source>
</evidence>
<evidence type="ECO:0000269" key="5">
    <source>
    </source>
</evidence>
<evidence type="ECO:0000305" key="6"/>
<evidence type="ECO:0000312" key="7">
    <source>
        <dbReference type="EMBL" id="AAC26007.1"/>
    </source>
</evidence>
<evidence type="ECO:0000312" key="8">
    <source>
        <dbReference type="EMBL" id="CAC24848.1"/>
    </source>
</evidence>
<evidence type="ECO:0000312" key="9">
    <source>
        <dbReference type="MGI" id="MGI:1929129"/>
    </source>
</evidence>
<evidence type="ECO:0007744" key="10">
    <source>
    </source>
</evidence>
<evidence type="ECO:0007744" key="11">
    <source>
    </source>
</evidence>
<evidence type="ECO:0007829" key="12">
    <source>
        <dbReference type="PDB" id="2LD7"/>
    </source>
</evidence>
<reference evidence="6 7" key="1">
    <citation type="journal article" date="1998" name="Mol. Cell">
        <title>SAP30, a component of the mSin3 corepressor complex involved in N-CoR-mediated repression by specific transcription factors.</title>
        <authorList>
            <person name="Laherty C.D."/>
            <person name="Billin A.N."/>
            <person name="Lavinsky R.M."/>
            <person name="Yochum G.S."/>
            <person name="Bush A.C."/>
            <person name="Sun J.-M."/>
            <person name="Mullen T.-M."/>
            <person name="Davie J.R."/>
            <person name="Rose D.W."/>
            <person name="Glass C.K."/>
            <person name="Rosenfeld M.G."/>
            <person name="Ayer D.E."/>
            <person name="Eisenman R.N."/>
        </authorList>
    </citation>
    <scope>NUCLEOTIDE SEQUENCE [MRNA]</scope>
    <scope>FUNCTION</scope>
    <scope>INTERACTION WITH NCOR1; SIN3A; SIN3B; HDAC1; HDAC2 AND RBBP4</scope>
</reference>
<reference key="2">
    <citation type="journal article" date="2005" name="Science">
        <title>The transcriptional landscape of the mammalian genome.</title>
        <authorList>
            <person name="Carninci P."/>
            <person name="Kasukawa T."/>
            <person name="Katayama S."/>
            <person name="Gough J."/>
            <person name="Frith M.C."/>
            <person name="Maeda N."/>
            <person name="Oyama R."/>
            <person name="Ravasi T."/>
            <person name="Lenhard B."/>
            <person name="Wells C."/>
            <person name="Kodzius R."/>
            <person name="Shimokawa K."/>
            <person name="Bajic V.B."/>
            <person name="Brenner S.E."/>
            <person name="Batalov S."/>
            <person name="Forrest A.R."/>
            <person name="Zavolan M."/>
            <person name="Davis M.J."/>
            <person name="Wilming L.G."/>
            <person name="Aidinis V."/>
            <person name="Allen J.E."/>
            <person name="Ambesi-Impiombato A."/>
            <person name="Apweiler R."/>
            <person name="Aturaliya R.N."/>
            <person name="Bailey T.L."/>
            <person name="Bansal M."/>
            <person name="Baxter L."/>
            <person name="Beisel K.W."/>
            <person name="Bersano T."/>
            <person name="Bono H."/>
            <person name="Chalk A.M."/>
            <person name="Chiu K.P."/>
            <person name="Choudhary V."/>
            <person name="Christoffels A."/>
            <person name="Clutterbuck D.R."/>
            <person name="Crowe M.L."/>
            <person name="Dalla E."/>
            <person name="Dalrymple B.P."/>
            <person name="de Bono B."/>
            <person name="Della Gatta G."/>
            <person name="di Bernardo D."/>
            <person name="Down T."/>
            <person name="Engstrom P."/>
            <person name="Fagiolini M."/>
            <person name="Faulkner G."/>
            <person name="Fletcher C.F."/>
            <person name="Fukushima T."/>
            <person name="Furuno M."/>
            <person name="Futaki S."/>
            <person name="Gariboldi M."/>
            <person name="Georgii-Hemming P."/>
            <person name="Gingeras T.R."/>
            <person name="Gojobori T."/>
            <person name="Green R.E."/>
            <person name="Gustincich S."/>
            <person name="Harbers M."/>
            <person name="Hayashi Y."/>
            <person name="Hensch T.K."/>
            <person name="Hirokawa N."/>
            <person name="Hill D."/>
            <person name="Huminiecki L."/>
            <person name="Iacono M."/>
            <person name="Ikeo K."/>
            <person name="Iwama A."/>
            <person name="Ishikawa T."/>
            <person name="Jakt M."/>
            <person name="Kanapin A."/>
            <person name="Katoh M."/>
            <person name="Kawasawa Y."/>
            <person name="Kelso J."/>
            <person name="Kitamura H."/>
            <person name="Kitano H."/>
            <person name="Kollias G."/>
            <person name="Krishnan S.P."/>
            <person name="Kruger A."/>
            <person name="Kummerfeld S.K."/>
            <person name="Kurochkin I.V."/>
            <person name="Lareau L.F."/>
            <person name="Lazarevic D."/>
            <person name="Lipovich L."/>
            <person name="Liu J."/>
            <person name="Liuni S."/>
            <person name="McWilliam S."/>
            <person name="Madan Babu M."/>
            <person name="Madera M."/>
            <person name="Marchionni L."/>
            <person name="Matsuda H."/>
            <person name="Matsuzawa S."/>
            <person name="Miki H."/>
            <person name="Mignone F."/>
            <person name="Miyake S."/>
            <person name="Morris K."/>
            <person name="Mottagui-Tabar S."/>
            <person name="Mulder N."/>
            <person name="Nakano N."/>
            <person name="Nakauchi H."/>
            <person name="Ng P."/>
            <person name="Nilsson R."/>
            <person name="Nishiguchi S."/>
            <person name="Nishikawa S."/>
            <person name="Nori F."/>
            <person name="Ohara O."/>
            <person name="Okazaki Y."/>
            <person name="Orlando V."/>
            <person name="Pang K.C."/>
            <person name="Pavan W.J."/>
            <person name="Pavesi G."/>
            <person name="Pesole G."/>
            <person name="Petrovsky N."/>
            <person name="Piazza S."/>
            <person name="Reed J."/>
            <person name="Reid J.F."/>
            <person name="Ring B.Z."/>
            <person name="Ringwald M."/>
            <person name="Rost B."/>
            <person name="Ruan Y."/>
            <person name="Salzberg S.L."/>
            <person name="Sandelin A."/>
            <person name="Schneider C."/>
            <person name="Schoenbach C."/>
            <person name="Sekiguchi K."/>
            <person name="Semple C.A."/>
            <person name="Seno S."/>
            <person name="Sessa L."/>
            <person name="Sheng Y."/>
            <person name="Shibata Y."/>
            <person name="Shimada H."/>
            <person name="Shimada K."/>
            <person name="Silva D."/>
            <person name="Sinclair B."/>
            <person name="Sperling S."/>
            <person name="Stupka E."/>
            <person name="Sugiura K."/>
            <person name="Sultana R."/>
            <person name="Takenaka Y."/>
            <person name="Taki K."/>
            <person name="Tammoja K."/>
            <person name="Tan S.L."/>
            <person name="Tang S."/>
            <person name="Taylor M.S."/>
            <person name="Tegner J."/>
            <person name="Teichmann S.A."/>
            <person name="Ueda H.R."/>
            <person name="van Nimwegen E."/>
            <person name="Verardo R."/>
            <person name="Wei C.L."/>
            <person name="Yagi K."/>
            <person name="Yamanishi H."/>
            <person name="Zabarovsky E."/>
            <person name="Zhu S."/>
            <person name="Zimmer A."/>
            <person name="Hide W."/>
            <person name="Bult C."/>
            <person name="Grimmond S.M."/>
            <person name="Teasdale R.D."/>
            <person name="Liu E.T."/>
            <person name="Brusic V."/>
            <person name="Quackenbush J."/>
            <person name="Wahlestedt C."/>
            <person name="Mattick J.S."/>
            <person name="Hume D.A."/>
            <person name="Kai C."/>
            <person name="Sasaki D."/>
            <person name="Tomaru Y."/>
            <person name="Fukuda S."/>
            <person name="Kanamori-Katayama M."/>
            <person name="Suzuki M."/>
            <person name="Aoki J."/>
            <person name="Arakawa T."/>
            <person name="Iida J."/>
            <person name="Imamura K."/>
            <person name="Itoh M."/>
            <person name="Kato T."/>
            <person name="Kawaji H."/>
            <person name="Kawagashira N."/>
            <person name="Kawashima T."/>
            <person name="Kojima M."/>
            <person name="Kondo S."/>
            <person name="Konno H."/>
            <person name="Nakano K."/>
            <person name="Ninomiya N."/>
            <person name="Nishio T."/>
            <person name="Okada M."/>
            <person name="Plessy C."/>
            <person name="Shibata K."/>
            <person name="Shiraki T."/>
            <person name="Suzuki S."/>
            <person name="Tagami M."/>
            <person name="Waki K."/>
            <person name="Watahiki A."/>
            <person name="Okamura-Oho Y."/>
            <person name="Suzuki H."/>
            <person name="Kawai J."/>
            <person name="Hayashizaki Y."/>
        </authorList>
    </citation>
    <scope>NUCLEOTIDE SEQUENCE [LARGE SCALE MRNA]</scope>
    <source>
        <strain>C57BL/6J</strain>
        <strain>NOD</strain>
        <tissue>Liver</tissue>
        <tissue>Thymus</tissue>
    </source>
</reference>
<reference key="3">
    <citation type="submission" date="2005-07" db="EMBL/GenBank/DDBJ databases">
        <authorList>
            <person name="Mural R.J."/>
            <person name="Adams M.D."/>
            <person name="Myers E.W."/>
            <person name="Smith H.O."/>
            <person name="Venter J.C."/>
        </authorList>
    </citation>
    <scope>NUCLEOTIDE SEQUENCE [LARGE SCALE GENOMIC DNA]</scope>
</reference>
<reference key="4">
    <citation type="journal article" date="2004" name="Genome Res.">
        <title>The status, quality, and expansion of the NIH full-length cDNA project: the Mammalian Gene Collection (MGC).</title>
        <authorList>
            <consortium name="The MGC Project Team"/>
        </authorList>
    </citation>
    <scope>NUCLEOTIDE SEQUENCE [LARGE SCALE MRNA]</scope>
    <source>
        <tissue>Brain</tissue>
    </source>
</reference>
<reference evidence="8" key="5">
    <citation type="journal article" date="2000" name="Genomics">
        <title>Mouse scrapie responsive gene 1 (Scrg1): genomic organization, physical linkage to sap30, genetic mapping on chromosome 8, and expression in neuronal primary cell cultures.</title>
        <authorList>
            <person name="Dron M."/>
            <person name="Tartare X."/>
            <person name="Guillo F."/>
            <person name="Haik S."/>
            <person name="Barbin G."/>
            <person name="Maury C."/>
            <person name="Tovey M."/>
            <person name="Dandoy-Dron F."/>
        </authorList>
    </citation>
    <scope>NUCLEOTIDE SEQUENCE [GENOMIC DNA] OF 181-220</scope>
    <source>
        <strain evidence="8">C57BL/6N</strain>
        <tissue evidence="8">Liver</tissue>
    </source>
</reference>
<reference key="6">
    <citation type="journal article" date="2009" name="Immunity">
        <title>The phagosomal proteome in interferon-gamma-activated macrophages.</title>
        <authorList>
            <person name="Trost M."/>
            <person name="English L."/>
            <person name="Lemieux S."/>
            <person name="Courcelles M."/>
            <person name="Desjardins M."/>
            <person name="Thibault P."/>
        </authorList>
    </citation>
    <scope>PHOSPHORYLATION [LARGE SCALE ANALYSIS] AT SER-131</scope>
    <scope>IDENTIFICATION BY MASS SPECTROMETRY [LARGE SCALE ANALYSIS]</scope>
</reference>
<reference key="7">
    <citation type="journal article" date="2010" name="Cell">
        <title>A tissue-specific atlas of mouse protein phosphorylation and expression.</title>
        <authorList>
            <person name="Huttlin E.L."/>
            <person name="Jedrychowski M.P."/>
            <person name="Elias J.E."/>
            <person name="Goswami T."/>
            <person name="Rad R."/>
            <person name="Beausoleil S.A."/>
            <person name="Villen J."/>
            <person name="Haas W."/>
            <person name="Sowa M.E."/>
            <person name="Gygi S.P."/>
        </authorList>
    </citation>
    <scope>PHOSPHORYLATION [LARGE SCALE ANALYSIS] AT SER-131 AND SER-138</scope>
    <scope>IDENTIFICATION BY MASS SPECTROMETRY [LARGE SCALE ANALYSIS]</scope>
    <source>
        <tissue>Brain</tissue>
        <tissue>Kidney</tissue>
        <tissue>Lung</tissue>
        <tissue>Pancreas</tissue>
        <tissue>Spleen</tissue>
        <tissue>Testis</tissue>
    </source>
</reference>
<reference key="8">
    <citation type="journal article" date="2010" name="Int. J. Biochem. Cell Biol.">
        <title>SLy2 targets the nuclear SAP30/HDAC1 complex.</title>
        <authorList>
            <person name="Brandt S."/>
            <person name="Ellwanger K."/>
            <person name="Beuter-Gunia C."/>
            <person name="Schuster M."/>
            <person name="Hausser A."/>
            <person name="Schmitz I."/>
            <person name="Beer-Hammer S."/>
        </authorList>
    </citation>
    <scope>INTERACTION WITH SAMSN1</scope>
</reference>
<reference key="9">
    <citation type="journal article" date="2017" name="EMBO J.">
        <title>Fam60a defines a variant Sin3a-Hdac complex in embryonic stem cells required for self-renewal.</title>
        <authorList>
            <person name="Streubel G."/>
            <person name="Fitzpatrick D.J."/>
            <person name="Oliviero G."/>
            <person name="Scelfo A."/>
            <person name="Moran B."/>
            <person name="Das S."/>
            <person name="Munawar N."/>
            <person name="Watson A."/>
            <person name="Wynne K."/>
            <person name="Negri G.L."/>
            <person name="Dillon E.T."/>
            <person name="Jammula S."/>
            <person name="Hokamp K."/>
            <person name="O'Connor D.P."/>
            <person name="Pasini D."/>
            <person name="Cagney G."/>
            <person name="Bracken A.P."/>
        </authorList>
    </citation>
    <scope>IDENTIFICATION IN A COMPLEX WITH SIN3A; SINHCAF; HDAC1; RBBP4; OGT AND TET1</scope>
</reference>
<accession>O88574</accession>
<accession>A2RSE9</accession>
<accession>Q99JB9</accession>
<organism>
    <name type="scientific">Mus musculus</name>
    <name type="common">Mouse</name>
    <dbReference type="NCBI Taxonomy" id="10090"/>
    <lineage>
        <taxon>Eukaryota</taxon>
        <taxon>Metazoa</taxon>
        <taxon>Chordata</taxon>
        <taxon>Craniata</taxon>
        <taxon>Vertebrata</taxon>
        <taxon>Euteleostomi</taxon>
        <taxon>Mammalia</taxon>
        <taxon>Eutheria</taxon>
        <taxon>Euarchontoglires</taxon>
        <taxon>Glires</taxon>
        <taxon>Rodentia</taxon>
        <taxon>Myomorpha</taxon>
        <taxon>Muroidea</taxon>
        <taxon>Muridae</taxon>
        <taxon>Murinae</taxon>
        <taxon>Mus</taxon>
        <taxon>Mus</taxon>
    </lineage>
</organism>
<comment type="function">
    <text evidence="1 5">Involved in the functional recruitment of the Sin3-histone deacetylase complex (HDAC) to a specific subset of N-CoR corepressor complexes. Capable of transcription repression by N-CoR. Active in deacetylating core histone octamers (when in a complex) but inactive in deacetylating nucleosomal histones.</text>
</comment>
<comment type="subunit">
    <text evidence="1 3 4 5">Component of the histone deacetylase complex that includes at least SIN3A, HDAC1 and HDAC2 (PubMed:9702189). Found in a complex composed of at least SINHCAF, SIN3A, HDAC1, SAP30, RBBP4, OGT and TET1 (PubMed:28554894). Interacts with HDAC1 (PubMed:9702189). Interacts with SIN3A, SIN3B, HDAC2, RBBP4 and NCOR1 (PubMed:9702189). Interacts directly with SAMSN1 (PubMed:20478393). Interacts with HCFC1 (By similarity). Interacts with SAP30BP (By similarity).</text>
</comment>
<comment type="interaction">
    <interactant intactId="EBI-593511">
        <id>O88574</id>
    </interactant>
    <interactant intactId="EBI-349004">
        <id>Q60974</id>
        <label>Ncor1</label>
    </interactant>
    <organismsDiffer>false</organismsDiffer>
    <experiments>3</experiments>
</comment>
<comment type="interaction">
    <interactant intactId="EBI-593511">
        <id>O88574</id>
    </interactant>
    <interactant intactId="EBI-349034">
        <id>Q60520</id>
        <label>Sin3a</label>
    </interactant>
    <organismsDiffer>false</organismsDiffer>
    <experiments>6</experiments>
</comment>
<comment type="subcellular location">
    <subcellularLocation>
        <location>Nucleus</location>
    </subcellularLocation>
</comment>
<comment type="similarity">
    <text evidence="6">Belongs to the SAP30 family.</text>
</comment>
<proteinExistence type="evidence at protein level"/>
<sequence length="220" mass="23231">MNGFTPEEMSRGGDAAAAVAAVVAAAAAAASAGNGNAAGGGAEVPGAGAVSASGPPGAAGPGPGQLCCLREDGERCGRAAGNASFSKRIQKSISQKKVKIELDKSARHLYICDYHKNLIQSVRNRRKRKGSDDDGGDSPVQDIDTPEVDLYQLQVNTLRRYKRHFKLPTRPGLNKAQLVEIVGCHFKSIPVNEKDTLTCFIYSVRNDKNKSDLKADSGVH</sequence>
<keyword id="KW-0002">3D-structure</keyword>
<keyword id="KW-0238">DNA-binding</keyword>
<keyword id="KW-1017">Isopeptide bond</keyword>
<keyword id="KW-0479">Metal-binding</keyword>
<keyword id="KW-0539">Nucleus</keyword>
<keyword id="KW-0597">Phosphoprotein</keyword>
<keyword id="KW-1185">Reference proteome</keyword>
<keyword id="KW-0678">Repressor</keyword>
<keyword id="KW-0804">Transcription</keyword>
<keyword id="KW-0805">Transcription regulation</keyword>
<keyword id="KW-0832">Ubl conjugation</keyword>
<keyword id="KW-0862">Zinc</keyword>
<keyword id="KW-0863">Zinc-finger</keyword>
<feature type="chain" id="PRO_0000097583" description="Histone deacetylase complex subunit SAP30">
    <location>
        <begin position="1"/>
        <end position="220"/>
    </location>
</feature>
<feature type="zinc finger region" description="Atypical">
    <location>
        <begin position="67"/>
        <end position="115"/>
    </location>
</feature>
<feature type="region of interest" description="Interaction with NCOR1" evidence="5">
    <location>
        <begin position="1"/>
        <end position="129"/>
    </location>
</feature>
<feature type="region of interest" description="Disordered" evidence="2">
    <location>
        <begin position="123"/>
        <end position="143"/>
    </location>
</feature>
<feature type="region of interest" description="Interaction with SIN3A" evidence="5">
    <location>
        <begin position="130"/>
        <end position="220"/>
    </location>
</feature>
<feature type="modified residue" description="Phosphothreonine" evidence="1">
    <location>
        <position position="5"/>
    </location>
</feature>
<feature type="modified residue" description="Phosphoserine" evidence="10 11">
    <location>
        <position position="131"/>
    </location>
</feature>
<feature type="modified residue" description="Phosphoserine" evidence="11">
    <location>
        <position position="138"/>
    </location>
</feature>
<feature type="modified residue" description="Phosphothreonine" evidence="1">
    <location>
        <position position="145"/>
    </location>
</feature>
<feature type="cross-link" description="Glycyl lysine isopeptide (Lys-Gly) (interchain with G-Cter in SUMO2)" evidence="1">
    <location>
        <position position="87"/>
    </location>
</feature>
<feature type="cross-link" description="Glycyl lysine isopeptide (Lys-Gly) (interchain with G-Cter in SUMO2)" evidence="1">
    <location>
        <position position="194"/>
    </location>
</feature>
<feature type="cross-link" description="Glycyl lysine isopeptide (Lys-Gly) (interchain with G-Cter in SUMO2)" evidence="1">
    <location>
        <position position="214"/>
    </location>
</feature>
<feature type="strand" evidence="12">
    <location>
        <begin position="135"/>
        <end position="138"/>
    </location>
</feature>
<feature type="strand" evidence="12">
    <location>
        <begin position="151"/>
        <end position="153"/>
    </location>
</feature>
<feature type="helix" evidence="12">
    <location>
        <begin position="155"/>
        <end position="164"/>
    </location>
</feature>
<feature type="helix" evidence="12">
    <location>
        <begin position="175"/>
        <end position="186"/>
    </location>
</feature>
<feature type="helix" evidence="12">
    <location>
        <begin position="193"/>
        <end position="206"/>
    </location>
</feature>
<name>SAP30_MOUSE</name>
<gene>
    <name evidence="9" type="primary">Sap30</name>
</gene>